<gene>
    <name type="primary">FGA</name>
</gene>
<keyword id="KW-1064">Adaptive immunity</keyword>
<keyword id="KW-0094">Blood coagulation</keyword>
<keyword id="KW-0175">Coiled coil</keyword>
<keyword id="KW-0903">Direct protein sequencing</keyword>
<keyword id="KW-1015">Disulfide bond</keyword>
<keyword id="KW-0356">Hemostasis</keyword>
<keyword id="KW-0391">Immunity</keyword>
<keyword id="KW-0399">Innate immunity</keyword>
<keyword id="KW-1185">Reference proteome</keyword>
<keyword id="KW-0964">Secreted</keyword>
<reference key="1">
    <citation type="journal article" date="1965" name="Acta Chem. Scand.">
        <title>Studies on fibrinopeptides from mammals.</title>
        <authorList>
            <person name="Blombaeck B."/>
            <person name="Blombaeck M."/>
            <person name="Grondahl N.J."/>
        </authorList>
    </citation>
    <scope>PROTEIN SEQUENCE</scope>
</reference>
<proteinExistence type="evidence at protein level"/>
<name>FIBA_CAVPO</name>
<sequence>TDTEFEAAGGGVR</sequence>
<protein>
    <recommendedName>
        <fullName>Fibrinogen alpha chain</fullName>
    </recommendedName>
    <component>
        <recommendedName>
            <fullName>Fibrinopeptide A</fullName>
        </recommendedName>
    </component>
</protein>
<organism>
    <name type="scientific">Cavia porcellus</name>
    <name type="common">Guinea pig</name>
    <dbReference type="NCBI Taxonomy" id="10141"/>
    <lineage>
        <taxon>Eukaryota</taxon>
        <taxon>Metazoa</taxon>
        <taxon>Chordata</taxon>
        <taxon>Craniata</taxon>
        <taxon>Vertebrata</taxon>
        <taxon>Euteleostomi</taxon>
        <taxon>Mammalia</taxon>
        <taxon>Eutheria</taxon>
        <taxon>Euarchontoglires</taxon>
        <taxon>Glires</taxon>
        <taxon>Rodentia</taxon>
        <taxon>Hystricomorpha</taxon>
        <taxon>Caviidae</taxon>
        <taxon>Cavia</taxon>
    </lineage>
</organism>
<evidence type="ECO:0000250" key="1">
    <source>
        <dbReference type="UniProtKB" id="E9PV24"/>
    </source>
</evidence>
<evidence type="ECO:0000250" key="2">
    <source>
        <dbReference type="UniProtKB" id="P02671"/>
    </source>
</evidence>
<comment type="function">
    <text evidence="1">Cleaved by the protease thrombin to yield monomers which, together with fibrinogen beta (FGB) and fibrinogen gamma (FGG), polymerize to form an insoluble fibrin matrix. Fibrin has a major function in hemostasis as one of the primary components of blood clots. In addition, functions during the early stages of wound repair to stabilize the lesion and guide cell migration during re-epithelialization. Was originally thought to be essential for platelet aggregation, based on in vitro studies using anticoagulated blood. However, subsequent studies have shown that it is not absolutely required for thrombus formation in vivo. Enhances expression of SELP in activated platelets via an ITGB3-dependent pathway. Maternal fibrinogen is essential for successful pregnancy. Fibrin deposition is also associated with infection, where it protects against IFNG-mediated hemorrhage. May also facilitate the immune response via both innate and T-cell mediated pathways.</text>
</comment>
<comment type="subunit">
    <text evidence="2">Heterohexamer; disulfide linked. Contains 2 sets of 3 non-identical chains (alpha, beta and gamma). The 2 heterotrimers are in head to head conformation with the N-termini in a small central domain (By similarity).</text>
</comment>
<comment type="subcellular location">
    <subcellularLocation>
        <location>Secreted</location>
    </subcellularLocation>
</comment>
<comment type="domain">
    <text evidence="2">A long coiled coil structure formed by 3 polypeptide chains connects the central nodule to the C-terminal domains (distal nodules). The long C-terminal ends of the alpha chains fold back, contributing a fourth strand to the coiled coil structure.</text>
</comment>
<comment type="PTM">
    <text>Conversion of fibrinogen to fibrin is triggered by thrombin, which cleaves fibrinopeptides A and B from alpha and beta chains, and thus exposes the N-terminal polymerization sites responsible for the formation of the soft clot. The soft clot is converted into the hard clot by factor XIIIA which catalyzes the epsilon-(gamma-glutamyl)lysine cross-linking between gamma chains (stronger) and between alpha chains (weaker) of different monomers.</text>
</comment>
<comment type="PTM">
    <text>Forms F13A-mediated cross-links between a glutamine and the epsilon-amino group of a lysine residue, forming fibronectin-fibrinogen heteropolymers.</text>
</comment>
<dbReference type="InParanoid" id="P14445"/>
<dbReference type="Proteomes" id="UP000005447">
    <property type="component" value="Unassembled WGS sequence"/>
</dbReference>
<dbReference type="GO" id="GO:0005576">
    <property type="term" value="C:extracellular region"/>
    <property type="evidence" value="ECO:0007669"/>
    <property type="project" value="UniProtKB-SubCell"/>
</dbReference>
<dbReference type="GO" id="GO:0002250">
    <property type="term" value="P:adaptive immune response"/>
    <property type="evidence" value="ECO:0007669"/>
    <property type="project" value="UniProtKB-KW"/>
</dbReference>
<dbReference type="GO" id="GO:0007596">
    <property type="term" value="P:blood coagulation"/>
    <property type="evidence" value="ECO:0007669"/>
    <property type="project" value="UniProtKB-KW"/>
</dbReference>
<dbReference type="GO" id="GO:0045087">
    <property type="term" value="P:innate immune response"/>
    <property type="evidence" value="ECO:0007669"/>
    <property type="project" value="UniProtKB-KW"/>
</dbReference>
<feature type="peptide" id="PRO_0000009011" description="Fibrinopeptide A">
    <location>
        <begin position="1"/>
        <end position="13"/>
    </location>
</feature>
<feature type="non-terminal residue">
    <location>
        <position position="13"/>
    </location>
</feature>
<accession>P14445</accession>